<keyword id="KW-0020">Allergen</keyword>
<keyword id="KW-0903">Direct protein sequencing</keyword>
<keyword id="KW-1015">Disulfide bond</keyword>
<keyword id="KW-0378">Hydrolase</keyword>
<keyword id="KW-0442">Lipid degradation</keyword>
<keyword id="KW-0443">Lipid metabolism</keyword>
<keyword id="KW-0964">Secreted</keyword>
<keyword id="KW-0732">Signal</keyword>
<protein>
    <recommendedName>
        <fullName evidence="9">Phospholipase A1</fullName>
        <shortName evidence="9">PLA1</shortName>
        <ecNumber evidence="3">3.1.1.32</ecNumber>
    </recommendedName>
    <alternativeName>
        <fullName>Allergen Ves v I</fullName>
    </alternativeName>
    <allergenName evidence="8">Ves v 1</allergenName>
</protein>
<feature type="signal peptide" evidence="5">
    <location>
        <begin position="1"/>
        <end position="27"/>
    </location>
</feature>
<feature type="propeptide" id="PRO_0000425190" evidence="7">
    <location>
        <begin position="28"/>
        <end position="36"/>
    </location>
</feature>
<feature type="chain" id="PRO_0000017813" description="Phospholipase A1">
    <location>
        <begin position="37"/>
        <end position="336"/>
    </location>
</feature>
<feature type="active site" description="Nucleophile" evidence="1">
    <location>
        <position position="173"/>
    </location>
</feature>
<feature type="active site" description="Charge relay system" evidence="6">
    <location>
        <position position="201"/>
    </location>
</feature>
<feature type="active site" description="Charge relay system" evidence="6">
    <location>
        <position position="265"/>
    </location>
</feature>
<feature type="disulfide bond" evidence="1">
    <location>
        <begin position="40"/>
        <end position="123"/>
    </location>
</feature>
<feature type="disulfide bond" evidence="1">
    <location>
        <begin position="212"/>
        <end position="217"/>
    </location>
</feature>
<feature type="disulfide bond" evidence="1">
    <location>
        <begin position="255"/>
        <end position="263"/>
    </location>
</feature>
<feature type="disulfide bond" evidence="1">
    <location>
        <begin position="280"/>
        <end position="304"/>
    </location>
</feature>
<feature type="disulfide bond" evidence="1">
    <location>
        <begin position="281"/>
        <end position="329"/>
    </location>
</feature>
<feature type="disulfide bond" evidence="1">
    <location>
        <begin position="297"/>
        <end position="302"/>
    </location>
</feature>
<feature type="sequence conflict" description="In Ref. 1; AA sequence." evidence="9" ref="1">
    <original>G</original>
    <variation>F</variation>
    <location>
        <position position="37"/>
    </location>
</feature>
<organism>
    <name type="scientific">Vespula vulgaris</name>
    <name type="common">Yellow jacket</name>
    <name type="synonym">Wasp</name>
    <dbReference type="NCBI Taxonomy" id="7454"/>
    <lineage>
        <taxon>Eukaryota</taxon>
        <taxon>Metazoa</taxon>
        <taxon>Ecdysozoa</taxon>
        <taxon>Arthropoda</taxon>
        <taxon>Hexapoda</taxon>
        <taxon>Insecta</taxon>
        <taxon>Pterygota</taxon>
        <taxon>Neoptera</taxon>
        <taxon>Endopterygota</taxon>
        <taxon>Hymenoptera</taxon>
        <taxon>Apocrita</taxon>
        <taxon>Aculeata</taxon>
        <taxon>Vespoidea</taxon>
        <taxon>Vespidae</taxon>
        <taxon>Vespinae</taxon>
        <taxon>Vespula</taxon>
    </lineage>
</organism>
<evidence type="ECO:0000250" key="1">
    <source>
        <dbReference type="UniProtKB" id="A0A0M3KKW3"/>
    </source>
</evidence>
<evidence type="ECO:0000250" key="2">
    <source>
        <dbReference type="UniProtKB" id="A2VBC4"/>
    </source>
</evidence>
<evidence type="ECO:0000250" key="3">
    <source>
        <dbReference type="UniProtKB" id="P0DMB4"/>
    </source>
</evidence>
<evidence type="ECO:0000250" key="4">
    <source>
        <dbReference type="UniProtKB" id="P0DMB7"/>
    </source>
</evidence>
<evidence type="ECO:0000255" key="5"/>
<evidence type="ECO:0000255" key="6">
    <source>
        <dbReference type="PROSITE-ProRule" id="PRU10037"/>
    </source>
</evidence>
<evidence type="ECO:0000269" key="7">
    <source>
    </source>
</evidence>
<evidence type="ECO:0000303" key="8">
    <source>
    </source>
</evidence>
<evidence type="ECO:0000305" key="9"/>
<evidence type="ECO:0000305" key="10">
    <source>
    </source>
</evidence>
<reference key="1">
    <citation type="journal article" date="1996" name="J. Allergy Clin. Immunol.">
        <title>Yellow jacket venom allergens, hyaluronidase and phospholipase: sequence similarity and antigenic cross-reactivity with their hornet and wasp homologs and possible implications for clinical allergy.</title>
        <authorList>
            <person name="King T.P."/>
            <person name="Lu G."/>
            <person name="Gonzalez M."/>
            <person name="Qian N."/>
            <person name="Soldatova L."/>
        </authorList>
    </citation>
    <scope>NUCLEOTIDE SEQUENCE [MRNA]</scope>
    <scope>PROTEIN SEQUENCE OF 37-65; 165-183; 247-263 AND 273-294</scope>
    <scope>SUBCELLULAR LOCATION</scope>
    <scope>ALLERGEN</scope>
    <source>
        <tissue>Venom</tissue>
        <tissue>Venom gland</tissue>
    </source>
</reference>
<accession>P49369</accession>
<name>PA1_VESVU</name>
<comment type="function">
    <text evidence="3 4 10">Catalyzes the hydrolysis of phosphatidylcholine with phospholipase A1 activity (By similarity). Induces hemolytic activity (By similarity). Acts as an allergen (PubMed:8828537).</text>
</comment>
<comment type="catalytic activity">
    <reaction evidence="3">
        <text>a 1,2-diacyl-sn-glycero-3-phosphocholine + H2O = a 2-acyl-sn-glycero-3-phosphocholine + a fatty acid + H(+)</text>
        <dbReference type="Rhea" id="RHEA:18689"/>
        <dbReference type="ChEBI" id="CHEBI:15377"/>
        <dbReference type="ChEBI" id="CHEBI:15378"/>
        <dbReference type="ChEBI" id="CHEBI:28868"/>
        <dbReference type="ChEBI" id="CHEBI:57643"/>
        <dbReference type="ChEBI" id="CHEBI:57875"/>
        <dbReference type="EC" id="3.1.1.32"/>
    </reaction>
</comment>
<comment type="subcellular location">
    <subcellularLocation>
        <location evidence="7">Secreted</location>
    </subcellularLocation>
</comment>
<comment type="tissue specificity">
    <text evidence="10">Expressed by the venom gland.</text>
</comment>
<comment type="allergen">
    <text evidence="2 7">Causes an allergic reaction in human (By similarity). It exhibits some cross-reactivity with antibodies from mouse immunizated to other Hymenoptera phospholipases (PubMed:8828537).</text>
</comment>
<comment type="similarity">
    <text evidence="9">Belongs to the AB hydrolase superfamily. Lipase family.</text>
</comment>
<proteinExistence type="evidence at protein level"/>
<sequence>MEENMNLKYLLLFVYFVQVLNCCYGHGDPLSYELDRGPKCPFNSDTVSIIIETRENRNRDLYTLQTLQNHPEFKKKTITRPVVFITHGFTSSASETNFINLAKALVDKDNYMVISIDWQTAACTNEAAGLKYLYYPTAARNTRLVGQYIATITQKLVKHYKISMANIRLIGHSLGAHASGFAGKKVQELKLGKYSEIIGLDPARPSFDSNHCSERLCETDAEYVQIIHTSNYLGTEKTLGTVDFYMNNGKNQPGCGRFFSEVCSHSRAVIYMAECIKHECCLIGIPKSKSSQPISSCTKQECVCVGLNAKKYPSRGSFYVPVESTAPFCNNKGKII</sequence>
<dbReference type="EC" id="3.1.1.32" evidence="3"/>
<dbReference type="EMBL" id="L43561">
    <property type="protein sequence ID" value="AAB48072.1"/>
    <property type="molecule type" value="mRNA"/>
</dbReference>
<dbReference type="SMR" id="P49369"/>
<dbReference type="Allergome" id="3520">
    <property type="allergen name" value="Ves v 1.0101"/>
</dbReference>
<dbReference type="Allergome" id="668">
    <property type="allergen name" value="Ves v 1"/>
</dbReference>
<dbReference type="ESTHER" id="vesvu-pa1">
    <property type="family name" value="Insect_Phospholipase"/>
</dbReference>
<dbReference type="GO" id="GO:0005615">
    <property type="term" value="C:extracellular space"/>
    <property type="evidence" value="ECO:0007669"/>
    <property type="project" value="TreeGrafter"/>
</dbReference>
<dbReference type="GO" id="GO:0008970">
    <property type="term" value="F:phospholipase A1 activity"/>
    <property type="evidence" value="ECO:0007669"/>
    <property type="project" value="UniProtKB-EC"/>
</dbReference>
<dbReference type="GO" id="GO:0004623">
    <property type="term" value="F:phospholipase A2 activity"/>
    <property type="evidence" value="ECO:0007669"/>
    <property type="project" value="UniProtKB-EC"/>
</dbReference>
<dbReference type="GO" id="GO:0016042">
    <property type="term" value="P:lipid catabolic process"/>
    <property type="evidence" value="ECO:0007669"/>
    <property type="project" value="UniProtKB-KW"/>
</dbReference>
<dbReference type="CDD" id="cd00707">
    <property type="entry name" value="Pancreat_lipase_like"/>
    <property type="match status" value="1"/>
</dbReference>
<dbReference type="Gene3D" id="3.40.50.1820">
    <property type="entry name" value="alpha/beta hydrolase"/>
    <property type="match status" value="1"/>
</dbReference>
<dbReference type="InterPro" id="IPR029058">
    <property type="entry name" value="AB_hydrolase_fold"/>
</dbReference>
<dbReference type="InterPro" id="IPR002334">
    <property type="entry name" value="Allerg_PlipaseA1"/>
</dbReference>
<dbReference type="InterPro" id="IPR013818">
    <property type="entry name" value="Lipase"/>
</dbReference>
<dbReference type="InterPro" id="IPR033906">
    <property type="entry name" value="Lipase_N"/>
</dbReference>
<dbReference type="InterPro" id="IPR000734">
    <property type="entry name" value="TAG_lipase"/>
</dbReference>
<dbReference type="PANTHER" id="PTHR11610">
    <property type="entry name" value="LIPASE"/>
    <property type="match status" value="1"/>
</dbReference>
<dbReference type="PANTHER" id="PTHR11610:SF178">
    <property type="entry name" value="LIPASE MEMBER H-A-LIKE PROTEIN"/>
    <property type="match status" value="1"/>
</dbReference>
<dbReference type="Pfam" id="PF00151">
    <property type="entry name" value="Lipase"/>
    <property type="match status" value="1"/>
</dbReference>
<dbReference type="PRINTS" id="PR00825">
    <property type="entry name" value="DOLALLERGEN"/>
</dbReference>
<dbReference type="SUPFAM" id="SSF53474">
    <property type="entry name" value="alpha/beta-Hydrolases"/>
    <property type="match status" value="1"/>
</dbReference>
<dbReference type="PROSITE" id="PS00120">
    <property type="entry name" value="LIPASE_SER"/>
    <property type="match status" value="1"/>
</dbReference>